<organism>
    <name type="scientific">Thermus thermophilus (strain ATCC 27634 / DSM 579 / HB8)</name>
    <dbReference type="NCBI Taxonomy" id="300852"/>
    <lineage>
        <taxon>Bacteria</taxon>
        <taxon>Thermotogati</taxon>
        <taxon>Deinococcota</taxon>
        <taxon>Deinococci</taxon>
        <taxon>Thermales</taxon>
        <taxon>Thermaceae</taxon>
        <taxon>Thermus</taxon>
    </lineage>
</organism>
<dbReference type="EC" id="3.1.1.29" evidence="1"/>
<dbReference type="EMBL" id="AP008226">
    <property type="protein sequence ID" value="BAD71411.1"/>
    <property type="molecule type" value="Genomic_DNA"/>
</dbReference>
<dbReference type="RefSeq" id="WP_011173630.1">
    <property type="nucleotide sequence ID" value="NC_006461.1"/>
</dbReference>
<dbReference type="RefSeq" id="YP_144854.1">
    <property type="nucleotide sequence ID" value="NC_006461.1"/>
</dbReference>
<dbReference type="PDB" id="5ZX8">
    <property type="method" value="X-ray"/>
    <property type="resolution" value="1.00 A"/>
    <property type="chains" value="A=1-183"/>
</dbReference>
<dbReference type="PDB" id="8X5T">
    <property type="method" value="X-ray"/>
    <property type="resolution" value="1.60 A"/>
    <property type="chains" value="A/B/C=1-183"/>
</dbReference>
<dbReference type="PDB" id="8X5U">
    <property type="method" value="X-ray"/>
    <property type="resolution" value="2.10 A"/>
    <property type="chains" value="A=1-167"/>
</dbReference>
<dbReference type="PDBsum" id="5ZX8"/>
<dbReference type="PDBsum" id="8X5T"/>
<dbReference type="PDBsum" id="8X5U"/>
<dbReference type="SMR" id="Q5SHZ2"/>
<dbReference type="EnsemblBacteria" id="BAD71411">
    <property type="protein sequence ID" value="BAD71411"/>
    <property type="gene ID" value="BAD71411"/>
</dbReference>
<dbReference type="GeneID" id="3169381"/>
<dbReference type="KEGG" id="ttj:TTHA1588"/>
<dbReference type="PATRIC" id="fig|300852.9.peg.1558"/>
<dbReference type="eggNOG" id="COG0193">
    <property type="taxonomic scope" value="Bacteria"/>
</dbReference>
<dbReference type="HOGENOM" id="CLU_062456_3_1_0"/>
<dbReference type="PhylomeDB" id="Q5SHZ2"/>
<dbReference type="BRENDA" id="2.3.2.12">
    <property type="organism ID" value="2305"/>
</dbReference>
<dbReference type="Proteomes" id="UP000000532">
    <property type="component" value="Chromosome"/>
</dbReference>
<dbReference type="GO" id="GO:0005737">
    <property type="term" value="C:cytoplasm"/>
    <property type="evidence" value="ECO:0007669"/>
    <property type="project" value="UniProtKB-SubCell"/>
</dbReference>
<dbReference type="GO" id="GO:0004045">
    <property type="term" value="F:peptidyl-tRNA hydrolase activity"/>
    <property type="evidence" value="ECO:0007669"/>
    <property type="project" value="UniProtKB-UniRule"/>
</dbReference>
<dbReference type="GO" id="GO:0000049">
    <property type="term" value="F:tRNA binding"/>
    <property type="evidence" value="ECO:0007669"/>
    <property type="project" value="UniProtKB-UniRule"/>
</dbReference>
<dbReference type="GO" id="GO:0006515">
    <property type="term" value="P:protein quality control for misfolded or incompletely synthesized proteins"/>
    <property type="evidence" value="ECO:0007669"/>
    <property type="project" value="UniProtKB-UniRule"/>
</dbReference>
<dbReference type="GO" id="GO:0072344">
    <property type="term" value="P:rescue of stalled ribosome"/>
    <property type="evidence" value="ECO:0007669"/>
    <property type="project" value="UniProtKB-UniRule"/>
</dbReference>
<dbReference type="CDD" id="cd00462">
    <property type="entry name" value="PTH"/>
    <property type="match status" value="1"/>
</dbReference>
<dbReference type="Gene3D" id="3.40.50.1470">
    <property type="entry name" value="Peptidyl-tRNA hydrolase"/>
    <property type="match status" value="1"/>
</dbReference>
<dbReference type="HAMAP" id="MF_00083">
    <property type="entry name" value="Pept_tRNA_hydro_bact"/>
    <property type="match status" value="1"/>
</dbReference>
<dbReference type="InterPro" id="IPR001328">
    <property type="entry name" value="Pept_tRNA_hydro"/>
</dbReference>
<dbReference type="InterPro" id="IPR018171">
    <property type="entry name" value="Pept_tRNA_hydro_CS"/>
</dbReference>
<dbReference type="InterPro" id="IPR036416">
    <property type="entry name" value="Pept_tRNA_hydro_sf"/>
</dbReference>
<dbReference type="NCBIfam" id="TIGR00447">
    <property type="entry name" value="pth"/>
    <property type="match status" value="1"/>
</dbReference>
<dbReference type="PANTHER" id="PTHR17224">
    <property type="entry name" value="PEPTIDYL-TRNA HYDROLASE"/>
    <property type="match status" value="1"/>
</dbReference>
<dbReference type="PANTHER" id="PTHR17224:SF1">
    <property type="entry name" value="PEPTIDYL-TRNA HYDROLASE"/>
    <property type="match status" value="1"/>
</dbReference>
<dbReference type="Pfam" id="PF01195">
    <property type="entry name" value="Pept_tRNA_hydro"/>
    <property type="match status" value="1"/>
</dbReference>
<dbReference type="SUPFAM" id="SSF53178">
    <property type="entry name" value="Peptidyl-tRNA hydrolase-like"/>
    <property type="match status" value="1"/>
</dbReference>
<dbReference type="PROSITE" id="PS01195">
    <property type="entry name" value="PEPT_TRNA_HYDROL_1"/>
    <property type="match status" value="1"/>
</dbReference>
<keyword id="KW-0002">3D-structure</keyword>
<keyword id="KW-0963">Cytoplasm</keyword>
<keyword id="KW-0378">Hydrolase</keyword>
<keyword id="KW-1185">Reference proteome</keyword>
<keyword id="KW-0694">RNA-binding</keyword>
<keyword id="KW-0820">tRNA-binding</keyword>
<evidence type="ECO:0000255" key="1">
    <source>
        <dbReference type="HAMAP-Rule" id="MF_00083"/>
    </source>
</evidence>
<evidence type="ECO:0000269" key="2">
    <source>
    </source>
</evidence>
<evidence type="ECO:0007744" key="3">
    <source>
        <dbReference type="PDB" id="5ZX8"/>
    </source>
</evidence>
<evidence type="ECO:0007829" key="4">
    <source>
        <dbReference type="PDB" id="5ZX8"/>
    </source>
</evidence>
<accession>Q5SHZ2</accession>
<protein>
    <recommendedName>
        <fullName evidence="1">Peptidyl-tRNA hydrolase</fullName>
        <shortName evidence="1">Pth</shortName>
        <ecNumber evidence="1">3.1.1.29</ecNumber>
    </recommendedName>
</protein>
<name>PTH_THET8</name>
<gene>
    <name evidence="1" type="primary">pth</name>
    <name type="ordered locus">TTHA1588</name>
</gene>
<comment type="function">
    <text evidence="1">Hydrolyzes ribosome-free peptidyl-tRNAs (with 1 or more amino acids incorporated), which drop off the ribosome during protein synthesis, or as a result of ribosome stalling.</text>
</comment>
<comment type="function">
    <text evidence="1">Catalyzes the release of premature peptidyl moieties from peptidyl-tRNA molecules trapped in stalled 50S ribosomal subunits, and thus maintains levels of free tRNAs and 50S ribosomes.</text>
</comment>
<comment type="catalytic activity">
    <reaction evidence="1">
        <text>an N-acyl-L-alpha-aminoacyl-tRNA + H2O = an N-acyl-L-amino acid + a tRNA + H(+)</text>
        <dbReference type="Rhea" id="RHEA:54448"/>
        <dbReference type="Rhea" id="RHEA-COMP:10123"/>
        <dbReference type="Rhea" id="RHEA-COMP:13883"/>
        <dbReference type="ChEBI" id="CHEBI:15377"/>
        <dbReference type="ChEBI" id="CHEBI:15378"/>
        <dbReference type="ChEBI" id="CHEBI:59874"/>
        <dbReference type="ChEBI" id="CHEBI:78442"/>
        <dbReference type="ChEBI" id="CHEBI:138191"/>
        <dbReference type="EC" id="3.1.1.29"/>
    </reaction>
</comment>
<comment type="subunit">
    <text evidence="1 2">Monomer.</text>
</comment>
<comment type="subcellular location">
    <subcellularLocation>
        <location evidence="1">Cytoplasm</location>
    </subcellularLocation>
</comment>
<comment type="similarity">
    <text evidence="1">Belongs to the PTH family.</text>
</comment>
<reference key="1">
    <citation type="submission" date="2004-11" db="EMBL/GenBank/DDBJ databases">
        <title>Complete genome sequence of Thermus thermophilus HB8.</title>
        <authorList>
            <person name="Masui R."/>
            <person name="Kurokawa K."/>
            <person name="Nakagawa N."/>
            <person name="Tokunaga F."/>
            <person name="Koyama Y."/>
            <person name="Shibata T."/>
            <person name="Oshima T."/>
            <person name="Yokoyama S."/>
            <person name="Yasunaga T."/>
            <person name="Kuramitsu S."/>
        </authorList>
    </citation>
    <scope>NUCLEOTIDE SEQUENCE [LARGE SCALE GENOMIC DNA]</scope>
    <source>
        <strain>ATCC 27634 / DSM 579 / HB8</strain>
    </source>
</reference>
<reference evidence="3" key="2">
    <citation type="journal article" date="2019" name="Proteins">
        <title>High-resolution crystal structure of peptidyl-tRNA hydrolase from Thermus thermophilus.</title>
        <authorList>
            <person name="Matsumoto A."/>
            <person name="Uehara Y."/>
            <person name="Shimizu Y."/>
            <person name="Ueda T."/>
            <person name="Uchiumi T."/>
            <person name="Ito K."/>
        </authorList>
    </citation>
    <scope>X-RAY CRYSTALLOGRAPHY (1.00 ANGSTROMS)</scope>
    <scope>SUBUNIT</scope>
    <source>
        <strain>ATCC 27634 / DSM 579 / HB8</strain>
    </source>
</reference>
<feature type="chain" id="PRO_0000187843" description="Peptidyl-tRNA hydrolase">
    <location>
        <begin position="1"/>
        <end position="183"/>
    </location>
</feature>
<feature type="active site" description="Proton acceptor" evidence="1">
    <location>
        <position position="19"/>
    </location>
</feature>
<feature type="binding site" evidence="1">
    <location>
        <position position="14"/>
    </location>
    <ligand>
        <name>tRNA</name>
        <dbReference type="ChEBI" id="CHEBI:17843"/>
    </ligand>
</feature>
<feature type="binding site" evidence="1">
    <location>
        <position position="55"/>
    </location>
    <ligand>
        <name>tRNA</name>
        <dbReference type="ChEBI" id="CHEBI:17843"/>
    </ligand>
</feature>
<feature type="binding site" evidence="1">
    <location>
        <position position="57"/>
    </location>
    <ligand>
        <name>tRNA</name>
        <dbReference type="ChEBI" id="CHEBI:17843"/>
    </ligand>
</feature>
<feature type="site" description="Discriminates between blocked and unblocked aminoacyl-tRNA" evidence="1">
    <location>
        <position position="9"/>
    </location>
</feature>
<feature type="site" description="Stabilizes the basic form of H active site to accept a proton" evidence="1">
    <location>
        <position position="82"/>
    </location>
</feature>
<feature type="strand" evidence="4">
    <location>
        <begin position="3"/>
        <end position="6"/>
    </location>
</feature>
<feature type="helix" evidence="4">
    <location>
        <begin position="12"/>
        <end position="14"/>
    </location>
</feature>
<feature type="helix" evidence="4">
    <location>
        <begin position="18"/>
        <end position="20"/>
    </location>
</feature>
<feature type="helix" evidence="4">
    <location>
        <begin position="21"/>
        <end position="26"/>
    </location>
</feature>
<feature type="strand" evidence="4">
    <location>
        <begin position="34"/>
        <end position="36"/>
    </location>
</feature>
<feature type="strand" evidence="4">
    <location>
        <begin position="39"/>
        <end position="44"/>
    </location>
</feature>
<feature type="strand" evidence="4">
    <location>
        <begin position="47"/>
        <end position="52"/>
    </location>
</feature>
<feature type="helix" evidence="4">
    <location>
        <begin position="56"/>
        <end position="59"/>
    </location>
</feature>
<feature type="helix" evidence="4">
    <location>
        <begin position="60"/>
        <end position="70"/>
    </location>
</feature>
<feature type="helix" evidence="4">
    <location>
        <begin position="74"/>
        <end position="76"/>
    </location>
</feature>
<feature type="strand" evidence="4">
    <location>
        <begin position="77"/>
        <end position="83"/>
    </location>
</feature>
<feature type="strand" evidence="4">
    <location>
        <begin position="91"/>
        <end position="96"/>
    </location>
</feature>
<feature type="helix" evidence="4">
    <location>
        <begin position="103"/>
        <end position="112"/>
    </location>
</feature>
<feature type="strand" evidence="4">
    <location>
        <begin position="117"/>
        <end position="123"/>
    </location>
</feature>
<feature type="helix" evidence="4">
    <location>
        <begin position="130"/>
        <end position="132"/>
    </location>
</feature>
<feature type="helix" evidence="4">
    <location>
        <begin position="133"/>
        <end position="137"/>
    </location>
</feature>
<feature type="helix" evidence="4">
    <location>
        <begin position="143"/>
        <end position="145"/>
    </location>
</feature>
<feature type="helix" evidence="4">
    <location>
        <begin position="146"/>
        <end position="166"/>
    </location>
</feature>
<feature type="helix" evidence="4">
    <location>
        <begin position="168"/>
        <end position="175"/>
    </location>
</feature>
<proteinExistence type="evidence at protein level"/>
<sequence>MFLVVGQGNPGERYARTRHNLGFMVLDRLGLSFRPRGEALVAEAEGGLFLKPLTYYNLTGRAVAPLARFYKIPPERILVVHDEMDLPLGRIRFKAGGSAAGNRGVLSIEEALGTRAFHRLRLGIGKPPDPSRGAEYVLSPFREEELPVVERVLEAAKEAVWCWVREGLPPCAGRFNGLDLSLG</sequence>